<organism>
    <name type="scientific">Debaryomyces hansenii (strain ATCC 36239 / CBS 767 / BCRC 21394 / JCM 1990 / NBRC 0083 / IGC 2968)</name>
    <name type="common">Yeast</name>
    <name type="synonym">Torulaspora hansenii</name>
    <dbReference type="NCBI Taxonomy" id="284592"/>
    <lineage>
        <taxon>Eukaryota</taxon>
        <taxon>Fungi</taxon>
        <taxon>Dikarya</taxon>
        <taxon>Ascomycota</taxon>
        <taxon>Saccharomycotina</taxon>
        <taxon>Pichiomycetes</taxon>
        <taxon>Debaryomycetaceae</taxon>
        <taxon>Debaryomyces</taxon>
    </lineage>
</organism>
<proteinExistence type="inferred from homology"/>
<accession>Q6BRN4</accession>
<comment type="function">
    <text evidence="1">ATP-dependent RNA helicase which is a subunit of the eIF4F complex involved in cap recognition and is required for mRNA binding to ribosome. In the current model of translation initiation, eIF4A unwinds RNA secondary structures in the 5'-UTR of mRNAs which is necessary to allow efficient binding of the small ribosomal subunit, and subsequent scanning for the initiator codon (By similarity).</text>
</comment>
<comment type="catalytic activity">
    <reaction>
        <text>ATP + H2O = ADP + phosphate + H(+)</text>
        <dbReference type="Rhea" id="RHEA:13065"/>
        <dbReference type="ChEBI" id="CHEBI:15377"/>
        <dbReference type="ChEBI" id="CHEBI:15378"/>
        <dbReference type="ChEBI" id="CHEBI:30616"/>
        <dbReference type="ChEBI" id="CHEBI:43474"/>
        <dbReference type="ChEBI" id="CHEBI:456216"/>
        <dbReference type="EC" id="3.6.4.13"/>
    </reaction>
</comment>
<comment type="subunit">
    <text evidence="1">Component of the eIF4F complex, which composition varies with external and internal environmental conditions. It is composed of at least eIF4A, eIF4E and eIF4G (By similarity).</text>
</comment>
<comment type="subcellular location">
    <subcellularLocation>
        <location evidence="1">Cytoplasm</location>
    </subcellularLocation>
</comment>
<comment type="domain">
    <text>The Q motif is unique to and characteristic of the DEAD box family of RNA helicases and controls ATP binding and hydrolysis.</text>
</comment>
<comment type="similarity">
    <text evidence="4">Belongs to the DEAD box helicase family. eIF4A subfamily.</text>
</comment>
<reference key="1">
    <citation type="journal article" date="2004" name="Nature">
        <title>Genome evolution in yeasts.</title>
        <authorList>
            <person name="Dujon B."/>
            <person name="Sherman D."/>
            <person name="Fischer G."/>
            <person name="Durrens P."/>
            <person name="Casaregola S."/>
            <person name="Lafontaine I."/>
            <person name="de Montigny J."/>
            <person name="Marck C."/>
            <person name="Neuveglise C."/>
            <person name="Talla E."/>
            <person name="Goffard N."/>
            <person name="Frangeul L."/>
            <person name="Aigle M."/>
            <person name="Anthouard V."/>
            <person name="Babour A."/>
            <person name="Barbe V."/>
            <person name="Barnay S."/>
            <person name="Blanchin S."/>
            <person name="Beckerich J.-M."/>
            <person name="Beyne E."/>
            <person name="Bleykasten C."/>
            <person name="Boisrame A."/>
            <person name="Boyer J."/>
            <person name="Cattolico L."/>
            <person name="Confanioleri F."/>
            <person name="de Daruvar A."/>
            <person name="Despons L."/>
            <person name="Fabre E."/>
            <person name="Fairhead C."/>
            <person name="Ferry-Dumazet H."/>
            <person name="Groppi A."/>
            <person name="Hantraye F."/>
            <person name="Hennequin C."/>
            <person name="Jauniaux N."/>
            <person name="Joyet P."/>
            <person name="Kachouri R."/>
            <person name="Kerrest A."/>
            <person name="Koszul R."/>
            <person name="Lemaire M."/>
            <person name="Lesur I."/>
            <person name="Ma L."/>
            <person name="Muller H."/>
            <person name="Nicaud J.-M."/>
            <person name="Nikolski M."/>
            <person name="Oztas S."/>
            <person name="Ozier-Kalogeropoulos O."/>
            <person name="Pellenz S."/>
            <person name="Potier S."/>
            <person name="Richard G.-F."/>
            <person name="Straub M.-L."/>
            <person name="Suleau A."/>
            <person name="Swennen D."/>
            <person name="Tekaia F."/>
            <person name="Wesolowski-Louvel M."/>
            <person name="Westhof E."/>
            <person name="Wirth B."/>
            <person name="Zeniou-Meyer M."/>
            <person name="Zivanovic Y."/>
            <person name="Bolotin-Fukuhara M."/>
            <person name="Thierry A."/>
            <person name="Bouchier C."/>
            <person name="Caudron B."/>
            <person name="Scarpelli C."/>
            <person name="Gaillardin C."/>
            <person name="Weissenbach J."/>
            <person name="Wincker P."/>
            <person name="Souciet J.-L."/>
        </authorList>
    </citation>
    <scope>NUCLEOTIDE SEQUENCE [LARGE SCALE GENOMIC DNA]</scope>
    <source>
        <strain>ATCC 36239 / CBS 767 / BCRC 21394 / JCM 1990 / NBRC 0083 / IGC 2968</strain>
    </source>
</reference>
<gene>
    <name type="primary">TIF1</name>
    <name type="synonym">TIF41</name>
    <name type="ordered locus">DEHA2D15048g</name>
</gene>
<name>IF4A_DEBHA</name>
<protein>
    <recommendedName>
        <fullName>ATP-dependent RNA helicase eIF4A</fullName>
        <ecNumber>3.6.4.13</ecNumber>
    </recommendedName>
    <alternativeName>
        <fullName>Eukaryotic initiation factor 4A</fullName>
        <shortName>eIF-4A</shortName>
    </alternativeName>
    <alternativeName>
        <fullName>Translation initiation factor 1</fullName>
    </alternativeName>
</protein>
<sequence>MASEGITEIDSGLIETNYDNVVYTFDDLNLKPNIVRGIFGYGYESPSAIQQRAILPITEGRDVLAQAQSGTGKTATFTISALQRIDENEKSTQALILAPTRELALQIQNVITHIGLYLNVTVHASIGGTSMKDDIEAFKSGVQIVVGTPGRVFDMIERRFFKTDKVKMFILDEADEMLSSGFKEQIYNIFRLLPETTQVVLLSATMPQDVLEVTTKFMNNPVRILVKKDELTLEGIKQFYINVEQEDYKFDCLCDLYDSISVTQAVIFCNTRSKVEFLTTKLKGENFTVSAIHADLPQADRDTIMNEFRSGSSRILISTDLLARGIDVQQVSLVINYDLPANKENYIHRIGRGGRFGRKGVAINFVTDQDVGMMREIEKFYSTQIEEMPADIGALFN</sequence>
<dbReference type="EC" id="3.6.4.13"/>
<dbReference type="EMBL" id="CR382136">
    <property type="protein sequence ID" value="CAG87307.1"/>
    <property type="molecule type" value="Genomic_DNA"/>
</dbReference>
<dbReference type="RefSeq" id="XP_459136.1">
    <property type="nucleotide sequence ID" value="XM_459136.1"/>
</dbReference>
<dbReference type="SMR" id="Q6BRN4"/>
<dbReference type="FunCoup" id="Q6BRN4">
    <property type="interactions" value="1375"/>
</dbReference>
<dbReference type="STRING" id="284592.Q6BRN4"/>
<dbReference type="GeneID" id="2901653"/>
<dbReference type="KEGG" id="dha:DEHA2D15048g"/>
<dbReference type="VEuPathDB" id="FungiDB:DEHA2D15048g"/>
<dbReference type="eggNOG" id="KOG0327">
    <property type="taxonomic scope" value="Eukaryota"/>
</dbReference>
<dbReference type="HOGENOM" id="CLU_003041_1_0_1"/>
<dbReference type="InParanoid" id="Q6BRN4"/>
<dbReference type="OMA" id="FGCQALV"/>
<dbReference type="OrthoDB" id="10265785at2759"/>
<dbReference type="Proteomes" id="UP000000599">
    <property type="component" value="Chromosome D"/>
</dbReference>
<dbReference type="GO" id="GO:0005737">
    <property type="term" value="C:cytoplasm"/>
    <property type="evidence" value="ECO:0007669"/>
    <property type="project" value="UniProtKB-SubCell"/>
</dbReference>
<dbReference type="GO" id="GO:0005524">
    <property type="term" value="F:ATP binding"/>
    <property type="evidence" value="ECO:0007669"/>
    <property type="project" value="UniProtKB-KW"/>
</dbReference>
<dbReference type="GO" id="GO:0016887">
    <property type="term" value="F:ATP hydrolysis activity"/>
    <property type="evidence" value="ECO:0007669"/>
    <property type="project" value="RHEA"/>
</dbReference>
<dbReference type="GO" id="GO:0003723">
    <property type="term" value="F:RNA binding"/>
    <property type="evidence" value="ECO:0007669"/>
    <property type="project" value="UniProtKB-KW"/>
</dbReference>
<dbReference type="GO" id="GO:0003724">
    <property type="term" value="F:RNA helicase activity"/>
    <property type="evidence" value="ECO:0007669"/>
    <property type="project" value="UniProtKB-EC"/>
</dbReference>
<dbReference type="GO" id="GO:0003743">
    <property type="term" value="F:translation initiation factor activity"/>
    <property type="evidence" value="ECO:0007669"/>
    <property type="project" value="UniProtKB-KW"/>
</dbReference>
<dbReference type="CDD" id="cd18787">
    <property type="entry name" value="SF2_C_DEAD"/>
    <property type="match status" value="1"/>
</dbReference>
<dbReference type="FunFam" id="3.40.50.300:FF:000089">
    <property type="entry name" value="Eukaryotic initiation factor 4A-II"/>
    <property type="match status" value="1"/>
</dbReference>
<dbReference type="FunFam" id="3.40.50.300:FF:000031">
    <property type="entry name" value="Eukaryotic initiation factor 4A-III"/>
    <property type="match status" value="1"/>
</dbReference>
<dbReference type="Gene3D" id="3.40.50.300">
    <property type="entry name" value="P-loop containing nucleotide triphosphate hydrolases"/>
    <property type="match status" value="2"/>
</dbReference>
<dbReference type="InterPro" id="IPR011545">
    <property type="entry name" value="DEAD/DEAH_box_helicase_dom"/>
</dbReference>
<dbReference type="InterPro" id="IPR014001">
    <property type="entry name" value="Helicase_ATP-bd"/>
</dbReference>
<dbReference type="InterPro" id="IPR001650">
    <property type="entry name" value="Helicase_C-like"/>
</dbReference>
<dbReference type="InterPro" id="IPR027417">
    <property type="entry name" value="P-loop_NTPase"/>
</dbReference>
<dbReference type="InterPro" id="IPR000629">
    <property type="entry name" value="RNA-helicase_DEAD-box_CS"/>
</dbReference>
<dbReference type="InterPro" id="IPR014014">
    <property type="entry name" value="RNA_helicase_DEAD_Q_motif"/>
</dbReference>
<dbReference type="PANTHER" id="PTHR47958">
    <property type="entry name" value="ATP-DEPENDENT RNA HELICASE DBP3"/>
    <property type="match status" value="1"/>
</dbReference>
<dbReference type="Pfam" id="PF00270">
    <property type="entry name" value="DEAD"/>
    <property type="match status" value="1"/>
</dbReference>
<dbReference type="Pfam" id="PF00271">
    <property type="entry name" value="Helicase_C"/>
    <property type="match status" value="1"/>
</dbReference>
<dbReference type="SMART" id="SM00487">
    <property type="entry name" value="DEXDc"/>
    <property type="match status" value="1"/>
</dbReference>
<dbReference type="SMART" id="SM00490">
    <property type="entry name" value="HELICc"/>
    <property type="match status" value="1"/>
</dbReference>
<dbReference type="SUPFAM" id="SSF52540">
    <property type="entry name" value="P-loop containing nucleoside triphosphate hydrolases"/>
    <property type="match status" value="1"/>
</dbReference>
<dbReference type="PROSITE" id="PS00039">
    <property type="entry name" value="DEAD_ATP_HELICASE"/>
    <property type="match status" value="1"/>
</dbReference>
<dbReference type="PROSITE" id="PS51192">
    <property type="entry name" value="HELICASE_ATP_BIND_1"/>
    <property type="match status" value="1"/>
</dbReference>
<dbReference type="PROSITE" id="PS51194">
    <property type="entry name" value="HELICASE_CTER"/>
    <property type="match status" value="1"/>
</dbReference>
<dbReference type="PROSITE" id="PS51195">
    <property type="entry name" value="Q_MOTIF"/>
    <property type="match status" value="1"/>
</dbReference>
<keyword id="KW-0067">ATP-binding</keyword>
<keyword id="KW-0963">Cytoplasm</keyword>
<keyword id="KW-0347">Helicase</keyword>
<keyword id="KW-0378">Hydrolase</keyword>
<keyword id="KW-0396">Initiation factor</keyword>
<keyword id="KW-0547">Nucleotide-binding</keyword>
<keyword id="KW-0648">Protein biosynthesis</keyword>
<keyword id="KW-1185">Reference proteome</keyword>
<keyword id="KW-0694">RNA-binding</keyword>
<feature type="chain" id="PRO_0000232135" description="ATP-dependent RNA helicase eIF4A">
    <location>
        <begin position="1"/>
        <end position="397"/>
    </location>
</feature>
<feature type="domain" description="Helicase ATP-binding" evidence="2">
    <location>
        <begin position="54"/>
        <end position="224"/>
    </location>
</feature>
<feature type="domain" description="Helicase C-terminal" evidence="3">
    <location>
        <begin position="235"/>
        <end position="396"/>
    </location>
</feature>
<feature type="short sequence motif" description="Q motif">
    <location>
        <begin position="23"/>
        <end position="51"/>
    </location>
</feature>
<feature type="short sequence motif" description="DEAD box">
    <location>
        <begin position="172"/>
        <end position="175"/>
    </location>
</feature>
<feature type="binding site" evidence="2">
    <location>
        <begin position="67"/>
        <end position="74"/>
    </location>
    <ligand>
        <name>ATP</name>
        <dbReference type="ChEBI" id="CHEBI:30616"/>
    </ligand>
</feature>
<evidence type="ECO:0000250" key="1"/>
<evidence type="ECO:0000255" key="2">
    <source>
        <dbReference type="PROSITE-ProRule" id="PRU00541"/>
    </source>
</evidence>
<evidence type="ECO:0000255" key="3">
    <source>
        <dbReference type="PROSITE-ProRule" id="PRU00542"/>
    </source>
</evidence>
<evidence type="ECO:0000305" key="4"/>